<gene>
    <name type="ordered locus">Pden_1905</name>
</gene>
<sequence length="246" mass="27069">MAGHSKWANIQHRKGKQDKLRSKLFSKLAKEITVAAKMGDPDPEKNPRLRLAVKEAKSNSMPKDVIDRAIKKSQGGDAENYDEIRYEGYGPNGIAIIVEAMTDNRNRTASNVRSYFTKYGGDLGQTGSVSFMFDRKGEILYKPDAGDADTVMMAAIEAGAEDVESDEDGHWIYTADTDLAEVSTALEASLGESEHAKLIWKPQAPTEIDLETATKLMKLIDALEEDDDVQNVTGNFDIPEEVAAQL</sequence>
<reference key="1">
    <citation type="submission" date="2006-12" db="EMBL/GenBank/DDBJ databases">
        <title>Complete sequence of chromosome 1 of Paracoccus denitrificans PD1222.</title>
        <authorList>
            <person name="Copeland A."/>
            <person name="Lucas S."/>
            <person name="Lapidus A."/>
            <person name="Barry K."/>
            <person name="Detter J.C."/>
            <person name="Glavina del Rio T."/>
            <person name="Hammon N."/>
            <person name="Israni S."/>
            <person name="Dalin E."/>
            <person name="Tice H."/>
            <person name="Pitluck S."/>
            <person name="Munk A.C."/>
            <person name="Brettin T."/>
            <person name="Bruce D."/>
            <person name="Han C."/>
            <person name="Tapia R."/>
            <person name="Gilna P."/>
            <person name="Schmutz J."/>
            <person name="Larimer F."/>
            <person name="Land M."/>
            <person name="Hauser L."/>
            <person name="Kyrpides N."/>
            <person name="Lykidis A."/>
            <person name="Spiro S."/>
            <person name="Richardson D.J."/>
            <person name="Moir J.W.B."/>
            <person name="Ferguson S.J."/>
            <person name="van Spanning R.J.M."/>
            <person name="Richardson P."/>
        </authorList>
    </citation>
    <scope>NUCLEOTIDE SEQUENCE [LARGE SCALE GENOMIC DNA]</scope>
    <source>
        <strain>Pd 1222</strain>
    </source>
</reference>
<feature type="chain" id="PRO_1000045353" description="Probable transcriptional regulatory protein Pden_1905">
    <location>
        <begin position="1"/>
        <end position="246"/>
    </location>
</feature>
<feature type="region of interest" description="Disordered" evidence="2">
    <location>
        <begin position="1"/>
        <end position="21"/>
    </location>
</feature>
<accession>A1B3A6</accession>
<proteinExistence type="inferred from homology"/>
<comment type="subcellular location">
    <subcellularLocation>
        <location evidence="1">Cytoplasm</location>
    </subcellularLocation>
</comment>
<comment type="similarity">
    <text evidence="1">Belongs to the TACO1 family.</text>
</comment>
<protein>
    <recommendedName>
        <fullName evidence="1">Probable transcriptional regulatory protein Pden_1905</fullName>
    </recommendedName>
</protein>
<evidence type="ECO:0000255" key="1">
    <source>
        <dbReference type="HAMAP-Rule" id="MF_00693"/>
    </source>
</evidence>
<evidence type="ECO:0000256" key="2">
    <source>
        <dbReference type="SAM" id="MobiDB-lite"/>
    </source>
</evidence>
<name>Y1905_PARDP</name>
<keyword id="KW-0963">Cytoplasm</keyword>
<keyword id="KW-0238">DNA-binding</keyword>
<keyword id="KW-1185">Reference proteome</keyword>
<keyword id="KW-0804">Transcription</keyword>
<keyword id="KW-0805">Transcription regulation</keyword>
<organism>
    <name type="scientific">Paracoccus denitrificans (strain Pd 1222)</name>
    <dbReference type="NCBI Taxonomy" id="318586"/>
    <lineage>
        <taxon>Bacteria</taxon>
        <taxon>Pseudomonadati</taxon>
        <taxon>Pseudomonadota</taxon>
        <taxon>Alphaproteobacteria</taxon>
        <taxon>Rhodobacterales</taxon>
        <taxon>Paracoccaceae</taxon>
        <taxon>Paracoccus</taxon>
    </lineage>
</organism>
<dbReference type="EMBL" id="CP000489">
    <property type="protein sequence ID" value="ABL70000.1"/>
    <property type="molecule type" value="Genomic_DNA"/>
</dbReference>
<dbReference type="RefSeq" id="WP_011748197.1">
    <property type="nucleotide sequence ID" value="NC_008686.1"/>
</dbReference>
<dbReference type="SMR" id="A1B3A6"/>
<dbReference type="STRING" id="318586.Pden_1905"/>
<dbReference type="EnsemblBacteria" id="ABL70000">
    <property type="protein sequence ID" value="ABL70000"/>
    <property type="gene ID" value="Pden_1905"/>
</dbReference>
<dbReference type="GeneID" id="93450303"/>
<dbReference type="KEGG" id="pde:Pden_1905"/>
<dbReference type="eggNOG" id="COG0217">
    <property type="taxonomic scope" value="Bacteria"/>
</dbReference>
<dbReference type="HOGENOM" id="CLU_062974_2_2_5"/>
<dbReference type="OrthoDB" id="9781053at2"/>
<dbReference type="Proteomes" id="UP000000361">
    <property type="component" value="Chromosome 1"/>
</dbReference>
<dbReference type="GO" id="GO:0005829">
    <property type="term" value="C:cytosol"/>
    <property type="evidence" value="ECO:0007669"/>
    <property type="project" value="TreeGrafter"/>
</dbReference>
<dbReference type="GO" id="GO:0003677">
    <property type="term" value="F:DNA binding"/>
    <property type="evidence" value="ECO:0007669"/>
    <property type="project" value="UniProtKB-UniRule"/>
</dbReference>
<dbReference type="GO" id="GO:0006355">
    <property type="term" value="P:regulation of DNA-templated transcription"/>
    <property type="evidence" value="ECO:0007669"/>
    <property type="project" value="UniProtKB-UniRule"/>
</dbReference>
<dbReference type="FunFam" id="1.10.10.200:FF:000002">
    <property type="entry name" value="Probable transcriptional regulatory protein CLM62_37755"/>
    <property type="match status" value="1"/>
</dbReference>
<dbReference type="Gene3D" id="1.10.10.200">
    <property type="match status" value="1"/>
</dbReference>
<dbReference type="Gene3D" id="3.30.70.980">
    <property type="match status" value="2"/>
</dbReference>
<dbReference type="HAMAP" id="MF_00693">
    <property type="entry name" value="Transcrip_reg_TACO1"/>
    <property type="match status" value="1"/>
</dbReference>
<dbReference type="InterPro" id="IPR017856">
    <property type="entry name" value="Integrase-like_N"/>
</dbReference>
<dbReference type="InterPro" id="IPR048300">
    <property type="entry name" value="TACO1_YebC-like_2nd/3rd_dom"/>
</dbReference>
<dbReference type="InterPro" id="IPR049083">
    <property type="entry name" value="TACO1_YebC_N"/>
</dbReference>
<dbReference type="InterPro" id="IPR002876">
    <property type="entry name" value="Transcrip_reg_TACO1-like"/>
</dbReference>
<dbReference type="InterPro" id="IPR026564">
    <property type="entry name" value="Transcrip_reg_TACO1-like_dom3"/>
</dbReference>
<dbReference type="InterPro" id="IPR029072">
    <property type="entry name" value="YebC-like"/>
</dbReference>
<dbReference type="NCBIfam" id="NF001030">
    <property type="entry name" value="PRK00110.1"/>
    <property type="match status" value="1"/>
</dbReference>
<dbReference type="NCBIfam" id="NF009044">
    <property type="entry name" value="PRK12378.1"/>
    <property type="match status" value="1"/>
</dbReference>
<dbReference type="NCBIfam" id="TIGR01033">
    <property type="entry name" value="YebC/PmpR family DNA-binding transcriptional regulator"/>
    <property type="match status" value="1"/>
</dbReference>
<dbReference type="PANTHER" id="PTHR12532:SF6">
    <property type="entry name" value="TRANSCRIPTIONAL REGULATORY PROTEIN YEBC-RELATED"/>
    <property type="match status" value="1"/>
</dbReference>
<dbReference type="PANTHER" id="PTHR12532">
    <property type="entry name" value="TRANSLATIONAL ACTIVATOR OF CYTOCHROME C OXIDASE 1"/>
    <property type="match status" value="1"/>
</dbReference>
<dbReference type="Pfam" id="PF20772">
    <property type="entry name" value="TACO1_YebC_N"/>
    <property type="match status" value="1"/>
</dbReference>
<dbReference type="Pfam" id="PF01709">
    <property type="entry name" value="Transcrip_reg"/>
    <property type="match status" value="1"/>
</dbReference>
<dbReference type="SUPFAM" id="SSF75625">
    <property type="entry name" value="YebC-like"/>
    <property type="match status" value="1"/>
</dbReference>